<proteinExistence type="predicted"/>
<keyword id="KW-0244">Early protein</keyword>
<keyword id="KW-0804">Transcription</keyword>
<keyword id="KW-0805">Transcription regulation</keyword>
<keyword id="KW-0806">Transcription termination</keyword>
<organismHost>
    <name type="scientific">Escherichia coli</name>
    <dbReference type="NCBI Taxonomy" id="562"/>
</organismHost>
<accession>P06154</accession>
<comment type="function">
    <text>This N protein may have, like the lambda N protein, an antitermination activity.</text>
</comment>
<feature type="chain" id="PRO_0000077580" description="Probable regulatory protein N">
    <location>
        <begin position="1"/>
        <end position="98"/>
    </location>
</feature>
<organism>
    <name type="scientific">Enterobacteria phage phi80</name>
    <name type="common">Bacteriophage phi-80</name>
    <dbReference type="NCBI Taxonomy" id="10713"/>
    <lineage>
        <taxon>Viruses</taxon>
        <taxon>Duplodnaviria</taxon>
        <taxon>Heunggongvirae</taxon>
        <taxon>Uroviricota</taxon>
        <taxon>Caudoviricetes</taxon>
    </lineage>
</organism>
<name>REGN_BPPH8</name>
<sequence>MIDDIKRIDSMINALRNMKQDIKRQQKLSEINSLDLSPKQAQKRNADADWIAMEQIKRRHELHALSVELGFAERRESYAPFELTDGWHRFDHKPREPQ</sequence>
<protein>
    <recommendedName>
        <fullName>Probable regulatory protein N</fullName>
    </recommendedName>
</protein>
<dbReference type="EMBL" id="X13065">
    <property type="protein sequence ID" value="CAA31468.1"/>
    <property type="molecule type" value="Genomic_DNA"/>
</dbReference>
<dbReference type="EMBL" id="M11919">
    <property type="protein sequence ID" value="AAA32296.1"/>
    <property type="molecule type" value="Genomic_DNA"/>
</dbReference>
<dbReference type="PIR" id="A24523">
    <property type="entry name" value="ZNBPFE"/>
</dbReference>
<dbReference type="RefSeq" id="YP_007947966.1">
    <property type="nucleotide sequence ID" value="NC_021190.1"/>
</dbReference>
<dbReference type="SMR" id="P06154"/>
<dbReference type="GeneID" id="24366477"/>
<dbReference type="KEGG" id="vg:24366477"/>
<dbReference type="GO" id="GO:0006353">
    <property type="term" value="P:DNA-templated transcription termination"/>
    <property type="evidence" value="ECO:0007669"/>
    <property type="project" value="UniProtKB-KW"/>
</dbReference>
<reference key="1">
    <citation type="journal article" date="1985" name="Gene">
        <title>Characterization and sequencing of the region containing gene N, the nutL site and tL1 terminator of bacteriophage phi 80.</title>
        <authorList>
            <person name="Tanaka S."/>
            <person name="Matsushiro A."/>
        </authorList>
    </citation>
    <scope>NUCLEOTIDE SEQUENCE [GENOMIC DNA]</scope>
</reference>
<gene>
    <name type="primary">N</name>
</gene>